<sequence length="333" mass="39002">MKGEAGHMLHNEKSKQEGHIWGSMRRTAFILGSGLLSFVAFWNSVTWHLQRFWGASGYFWQAQWERLLTTFEGKEWILFFIGAIQVPCLFFWSFNGLLLVVDTTGKPNFISRYRIQVGKNEPVDPVKLRQSIRTVLFNQCMISFPMVVFLYPFLKWWRDPCRRELPTFHWFLLELAIFTLIEEVLFYYSHRLLHHPTFYKKIHKKHHEWTAPIGVISLYAHPIEHAVSNMLPVIVGPLVMGSHLSSITMWFSLALIITTISHCGYHLPFLPSPEFHDYHHLKFNQCYGVLGVLDHLHGTDTMFKQTKAYERHVLLLGFTPLSESIPDSPKRME</sequence>
<reference key="1">
    <citation type="journal article" date="2004" name="Nat. Genet.">
        <title>Complete sequencing and characterization of 21,243 full-length human cDNAs.</title>
        <authorList>
            <person name="Ota T."/>
            <person name="Suzuki Y."/>
            <person name="Nishikawa T."/>
            <person name="Otsuki T."/>
            <person name="Sugiyama T."/>
            <person name="Irie R."/>
            <person name="Wakamatsu A."/>
            <person name="Hayashi K."/>
            <person name="Sato H."/>
            <person name="Nagai K."/>
            <person name="Kimura K."/>
            <person name="Makita H."/>
            <person name="Sekine M."/>
            <person name="Obayashi M."/>
            <person name="Nishi T."/>
            <person name="Shibahara T."/>
            <person name="Tanaka T."/>
            <person name="Ishii S."/>
            <person name="Yamamoto J."/>
            <person name="Saito K."/>
            <person name="Kawai Y."/>
            <person name="Isono Y."/>
            <person name="Nakamura Y."/>
            <person name="Nagahari K."/>
            <person name="Murakami K."/>
            <person name="Yasuda T."/>
            <person name="Iwayanagi T."/>
            <person name="Wagatsuma M."/>
            <person name="Shiratori A."/>
            <person name="Sudo H."/>
            <person name="Hosoiri T."/>
            <person name="Kaku Y."/>
            <person name="Kodaira H."/>
            <person name="Kondo H."/>
            <person name="Sugawara M."/>
            <person name="Takahashi M."/>
            <person name="Kanda K."/>
            <person name="Yokoi T."/>
            <person name="Furuya T."/>
            <person name="Kikkawa E."/>
            <person name="Omura Y."/>
            <person name="Abe K."/>
            <person name="Kamihara K."/>
            <person name="Katsuta N."/>
            <person name="Sato K."/>
            <person name="Tanikawa M."/>
            <person name="Yamazaki M."/>
            <person name="Ninomiya K."/>
            <person name="Ishibashi T."/>
            <person name="Yamashita H."/>
            <person name="Murakawa K."/>
            <person name="Fujimori K."/>
            <person name="Tanai H."/>
            <person name="Kimata M."/>
            <person name="Watanabe M."/>
            <person name="Hiraoka S."/>
            <person name="Chiba Y."/>
            <person name="Ishida S."/>
            <person name="Ono Y."/>
            <person name="Takiguchi S."/>
            <person name="Watanabe S."/>
            <person name="Yosida M."/>
            <person name="Hotuta T."/>
            <person name="Kusano J."/>
            <person name="Kanehori K."/>
            <person name="Takahashi-Fujii A."/>
            <person name="Hara H."/>
            <person name="Tanase T.-O."/>
            <person name="Nomura Y."/>
            <person name="Togiya S."/>
            <person name="Komai F."/>
            <person name="Hara R."/>
            <person name="Takeuchi K."/>
            <person name="Arita M."/>
            <person name="Imose N."/>
            <person name="Musashino K."/>
            <person name="Yuuki H."/>
            <person name="Oshima A."/>
            <person name="Sasaki N."/>
            <person name="Aotsuka S."/>
            <person name="Yoshikawa Y."/>
            <person name="Matsunawa H."/>
            <person name="Ichihara T."/>
            <person name="Shiohata N."/>
            <person name="Sano S."/>
            <person name="Moriya S."/>
            <person name="Momiyama H."/>
            <person name="Satoh N."/>
            <person name="Takami S."/>
            <person name="Terashima Y."/>
            <person name="Suzuki O."/>
            <person name="Nakagawa S."/>
            <person name="Senoh A."/>
            <person name="Mizoguchi H."/>
            <person name="Goto Y."/>
            <person name="Shimizu F."/>
            <person name="Wakebe H."/>
            <person name="Hishigaki H."/>
            <person name="Watanabe T."/>
            <person name="Sugiyama A."/>
            <person name="Takemoto M."/>
            <person name="Kawakami B."/>
            <person name="Yamazaki M."/>
            <person name="Watanabe K."/>
            <person name="Kumagai A."/>
            <person name="Itakura S."/>
            <person name="Fukuzumi Y."/>
            <person name="Fujimori Y."/>
            <person name="Komiyama M."/>
            <person name="Tashiro H."/>
            <person name="Tanigami A."/>
            <person name="Fujiwara T."/>
            <person name="Ono T."/>
            <person name="Yamada K."/>
            <person name="Fujii Y."/>
            <person name="Ozaki K."/>
            <person name="Hirao M."/>
            <person name="Ohmori Y."/>
            <person name="Kawabata A."/>
            <person name="Hikiji T."/>
            <person name="Kobatake N."/>
            <person name="Inagaki H."/>
            <person name="Ikema Y."/>
            <person name="Okamoto S."/>
            <person name="Okitani R."/>
            <person name="Kawakami T."/>
            <person name="Noguchi S."/>
            <person name="Itoh T."/>
            <person name="Shigeta K."/>
            <person name="Senba T."/>
            <person name="Matsumura K."/>
            <person name="Nakajima Y."/>
            <person name="Mizuno T."/>
            <person name="Morinaga M."/>
            <person name="Sasaki M."/>
            <person name="Togashi T."/>
            <person name="Oyama M."/>
            <person name="Hata H."/>
            <person name="Watanabe M."/>
            <person name="Komatsu T."/>
            <person name="Mizushima-Sugano J."/>
            <person name="Satoh T."/>
            <person name="Shirai Y."/>
            <person name="Takahashi Y."/>
            <person name="Nakagawa K."/>
            <person name="Okumura K."/>
            <person name="Nagase T."/>
            <person name="Nomura N."/>
            <person name="Kikuchi H."/>
            <person name="Masuho Y."/>
            <person name="Yamashita R."/>
            <person name="Nakai K."/>
            <person name="Yada T."/>
            <person name="Nakamura Y."/>
            <person name="Ohara O."/>
            <person name="Isogai T."/>
            <person name="Sugano S."/>
        </authorList>
    </citation>
    <scope>NUCLEOTIDE SEQUENCE [LARGE SCALE MRNA] (ISOFORM 2)</scope>
    <scope>NUCLEOTIDE SEQUENCE [LARGE SCALE MRNA] OF 1-191 (ISOFORM 1)</scope>
    <source>
        <tissue>Hippocampus</tissue>
        <tissue>Placenta</tissue>
    </source>
</reference>
<reference key="2">
    <citation type="journal article" date="2004" name="Nature">
        <title>The DNA sequence and comparative analysis of human chromosome 5.</title>
        <authorList>
            <person name="Schmutz J."/>
            <person name="Martin J."/>
            <person name="Terry A."/>
            <person name="Couronne O."/>
            <person name="Grimwood J."/>
            <person name="Lowry S."/>
            <person name="Gordon L.A."/>
            <person name="Scott D."/>
            <person name="Xie G."/>
            <person name="Huang W."/>
            <person name="Hellsten U."/>
            <person name="Tran-Gyamfi M."/>
            <person name="She X."/>
            <person name="Prabhakar S."/>
            <person name="Aerts A."/>
            <person name="Altherr M."/>
            <person name="Bajorek E."/>
            <person name="Black S."/>
            <person name="Branscomb E."/>
            <person name="Caoile C."/>
            <person name="Challacombe J.F."/>
            <person name="Chan Y.M."/>
            <person name="Denys M."/>
            <person name="Detter J.C."/>
            <person name="Escobar J."/>
            <person name="Flowers D."/>
            <person name="Fotopulos D."/>
            <person name="Glavina T."/>
            <person name="Gomez M."/>
            <person name="Gonzales E."/>
            <person name="Goodstein D."/>
            <person name="Grigoriev I."/>
            <person name="Groza M."/>
            <person name="Hammon N."/>
            <person name="Hawkins T."/>
            <person name="Haydu L."/>
            <person name="Israni S."/>
            <person name="Jett J."/>
            <person name="Kadner K."/>
            <person name="Kimball H."/>
            <person name="Kobayashi A."/>
            <person name="Lopez F."/>
            <person name="Lou Y."/>
            <person name="Martinez D."/>
            <person name="Medina C."/>
            <person name="Morgan J."/>
            <person name="Nandkeshwar R."/>
            <person name="Noonan J.P."/>
            <person name="Pitluck S."/>
            <person name="Pollard M."/>
            <person name="Predki P."/>
            <person name="Priest J."/>
            <person name="Ramirez L."/>
            <person name="Retterer J."/>
            <person name="Rodriguez A."/>
            <person name="Rogers S."/>
            <person name="Salamov A."/>
            <person name="Salazar A."/>
            <person name="Thayer N."/>
            <person name="Tice H."/>
            <person name="Tsai M."/>
            <person name="Ustaszewska A."/>
            <person name="Vo N."/>
            <person name="Wheeler J."/>
            <person name="Wu K."/>
            <person name="Yang J."/>
            <person name="Dickson M."/>
            <person name="Cheng J.-F."/>
            <person name="Eichler E.E."/>
            <person name="Olsen A."/>
            <person name="Pennacchio L.A."/>
            <person name="Rokhsar D.S."/>
            <person name="Richardson P."/>
            <person name="Lucas S.M."/>
            <person name="Myers R.M."/>
            <person name="Rubin E.M."/>
        </authorList>
    </citation>
    <scope>NUCLEOTIDE SEQUENCE [LARGE SCALE GENOMIC DNA]</scope>
</reference>
<reference key="3">
    <citation type="journal article" date="2004" name="Genome Res.">
        <title>The status, quality, and expansion of the NIH full-length cDNA project: the Mammalian Gene Collection (MGC).</title>
        <authorList>
            <consortium name="The MGC Project Team"/>
        </authorList>
    </citation>
    <scope>NUCLEOTIDE SEQUENCE [LARGE SCALE MRNA] (ISOFORM 1)</scope>
    <source>
        <tissue>Ovary</tissue>
        <tissue>Skin</tissue>
    </source>
</reference>
<reference key="4">
    <citation type="journal article" date="2016" name="Blood Cancer J.">
        <title>Novel function of FAXDC2 in megakaryopoiesis.</title>
        <authorList>
            <person name="Jin Q."/>
            <person name="Ren Y."/>
            <person name="Wang M."/>
            <person name="Suraneni P.K."/>
            <person name="Li D."/>
            <person name="Crispino J.D."/>
            <person name="Fan J."/>
            <person name="Huang Z."/>
        </authorList>
    </citation>
    <scope>FUNCTION</scope>
    <scope>INDUCTION</scope>
    <scope>SUBCELLULAR LOCATION</scope>
    <scope>TISSUE SPECIFICITY</scope>
</reference>
<accession>Q96IV6</accession>
<accession>B4DIE1</accession>
<accession>Q9BSX6</accession>
<accession>Q9H8C7</accession>
<keyword id="KW-0025">Alternative splicing</keyword>
<keyword id="KW-0963">Cytoplasm</keyword>
<keyword id="KW-0472">Membrane</keyword>
<keyword id="KW-1267">Proteomics identification</keyword>
<keyword id="KW-1185">Reference proteome</keyword>
<keyword id="KW-0812">Transmembrane</keyword>
<keyword id="KW-1133">Transmembrane helix</keyword>
<feature type="chain" id="PRO_0000249848" description="Fatty acid hydroxylase domain-containing protein 2">
    <location>
        <begin position="1"/>
        <end position="333"/>
    </location>
</feature>
<feature type="transmembrane region" description="Helical" evidence="1">
    <location>
        <begin position="29"/>
        <end position="49"/>
    </location>
</feature>
<feature type="transmembrane region" description="Helical" evidence="1">
    <location>
        <begin position="77"/>
        <end position="97"/>
    </location>
</feature>
<feature type="transmembrane region" description="Helical" evidence="1">
    <location>
        <begin position="134"/>
        <end position="154"/>
    </location>
</feature>
<feature type="transmembrane region" description="Helical" evidence="1">
    <location>
        <begin position="168"/>
        <end position="188"/>
    </location>
</feature>
<feature type="transmembrane region" description="Helical" evidence="1">
    <location>
        <begin position="215"/>
        <end position="235"/>
    </location>
</feature>
<feature type="transmembrane region" description="Helical" evidence="1">
    <location>
        <begin position="237"/>
        <end position="257"/>
    </location>
</feature>
<feature type="domain" description="Fatty acid hydroxylase" evidence="1">
    <location>
        <begin position="176"/>
        <end position="299"/>
    </location>
</feature>
<feature type="splice variant" id="VSP_056995" description="In isoform 2." evidence="3">
    <location>
        <begin position="1"/>
        <end position="23"/>
    </location>
</feature>
<feature type="sequence variant" id="VAR_048900" description="In dbSNP:rs17641488.">
    <original>R</original>
    <variation>H</variation>
    <location>
        <position position="133"/>
    </location>
</feature>
<proteinExistence type="evidence at protein level"/>
<comment type="function">
    <text evidence="2">Promotes megakaryocyte differentiation by enhancing ERK phosphorylation and up-regulating RUNX1 expression.</text>
</comment>
<comment type="interaction">
    <interactant intactId="EBI-12142299">
        <id>Q96IV6</id>
    </interactant>
    <interactant intactId="EBI-13059134">
        <id>Q13520</id>
        <label>AQP6</label>
    </interactant>
    <organismsDiffer>false</organismsDiffer>
    <experiments>3</experiments>
</comment>
<comment type="interaction">
    <interactant intactId="EBI-12142299">
        <id>Q96IV6</id>
    </interactant>
    <interactant intactId="EBI-11343438">
        <id>Q3SXY8</id>
        <label>ARL13B</label>
    </interactant>
    <organismsDiffer>false</organismsDiffer>
    <experiments>3</experiments>
</comment>
<comment type="interaction">
    <interactant intactId="EBI-12142299">
        <id>Q96IV6</id>
    </interactant>
    <interactant intactId="EBI-7797864">
        <id>P11912</id>
        <label>CD79A</label>
    </interactant>
    <organismsDiffer>false</organismsDiffer>
    <experiments>3</experiments>
</comment>
<comment type="interaction">
    <interactant intactId="EBI-12142299">
        <id>Q96IV6</id>
    </interactant>
    <interactant intactId="EBI-2130213">
        <id>Q99675</id>
        <label>CGRRF1</label>
    </interactant>
    <organismsDiffer>false</organismsDiffer>
    <experiments>3</experiments>
</comment>
<comment type="interaction">
    <interactant intactId="EBI-12142299">
        <id>Q96IV6</id>
    </interactant>
    <interactant intactId="EBI-740744">
        <id>O95471</id>
        <label>CLDN7</label>
    </interactant>
    <organismsDiffer>false</organismsDiffer>
    <experiments>3</experiments>
</comment>
<comment type="interaction">
    <interactant intactId="EBI-12142299">
        <id>Q96IV6</id>
    </interactant>
    <interactant intactId="EBI-6942903">
        <id>Q96BA8</id>
        <label>CREB3L1</label>
    </interactant>
    <organismsDiffer>false</organismsDiffer>
    <experiments>3</experiments>
</comment>
<comment type="interaction">
    <interactant intactId="EBI-12142299">
        <id>Q96IV6</id>
    </interactant>
    <interactant intactId="EBI-1046040">
        <id>P00387</id>
        <label>CYB5R3</label>
    </interactant>
    <organismsDiffer>false</organismsDiffer>
    <experiments>3</experiments>
</comment>
<comment type="interaction">
    <interactant intactId="EBI-12142299">
        <id>Q96IV6</id>
    </interactant>
    <interactant intactId="EBI-3915253">
        <id>Q15125</id>
        <label>EBP</label>
    </interactant>
    <organismsDiffer>false</organismsDiffer>
    <experiments>3</experiments>
</comment>
<comment type="interaction">
    <interactant intactId="EBI-12142299">
        <id>Q96IV6</id>
    </interactant>
    <interactant intactId="EBI-18535450">
        <id>Q9GZR5</id>
        <label>ELOVL4</label>
    </interactant>
    <organismsDiffer>false</organismsDiffer>
    <experiments>3</experiments>
</comment>
<comment type="interaction">
    <interactant intactId="EBI-12142299">
        <id>Q96IV6</id>
    </interactant>
    <interactant intactId="EBI-781551">
        <id>Q9Y282</id>
        <label>ERGIC3</label>
    </interactant>
    <organismsDiffer>false</organismsDiffer>
    <experiments>3</experiments>
</comment>
<comment type="interaction">
    <interactant intactId="EBI-12142299">
        <id>Q96IV6</id>
    </interactant>
    <interactant intactId="EBI-2833872">
        <id>O15552</id>
        <label>FFAR2</label>
    </interactant>
    <organismsDiffer>false</organismsDiffer>
    <experiments>3</experiments>
</comment>
<comment type="interaction">
    <interactant intactId="EBI-12142299">
        <id>Q96IV6</id>
    </interactant>
    <interactant intactId="EBI-17231387">
        <id>Q6ZVE7</id>
        <label>GOLT1A</label>
    </interactant>
    <organismsDiffer>false</organismsDiffer>
    <experiments>3</experiments>
</comment>
<comment type="interaction">
    <interactant intactId="EBI-12142299">
        <id>Q96IV6</id>
    </interactant>
    <interactant intactId="EBI-13345167">
        <id>Q8TDT2</id>
        <label>GPR152</label>
    </interactant>
    <organismsDiffer>false</organismsDiffer>
    <experiments>3</experiments>
</comment>
<comment type="interaction">
    <interactant intactId="EBI-12142299">
        <id>Q96IV6</id>
    </interactant>
    <interactant intactId="EBI-11721746">
        <id>Q8TED1</id>
        <label>GPX8</label>
    </interactant>
    <organismsDiffer>false</organismsDiffer>
    <experiments>3</experiments>
</comment>
<comment type="interaction">
    <interactant intactId="EBI-12142299">
        <id>Q96IV6</id>
    </interactant>
    <interactant intactId="EBI-18053395">
        <id>Q7Z5P4</id>
        <label>HSD17B13</label>
    </interactant>
    <organismsDiffer>false</organismsDiffer>
    <experiments>3</experiments>
</comment>
<comment type="interaction">
    <interactant intactId="EBI-12142299">
        <id>Q96IV6</id>
    </interactant>
    <interactant intactId="EBI-724754">
        <id>O14880</id>
        <label>MGST3</label>
    </interactant>
    <organismsDiffer>false</organismsDiffer>
    <experiments>3</experiments>
</comment>
<comment type="interaction">
    <interactant intactId="EBI-12142299">
        <id>Q96IV6</id>
    </interactant>
    <interactant intactId="EBI-10969203">
        <id>O14524-2</id>
        <label>NEMP1</label>
    </interactant>
    <organismsDiffer>false</organismsDiffer>
    <experiments>3</experiments>
</comment>
<comment type="interaction">
    <interactant intactId="EBI-12142299">
        <id>Q96IV6</id>
    </interactant>
    <interactant intactId="EBI-7037612">
        <id>Q96RD7</id>
        <label>PANX1</label>
    </interactant>
    <organismsDiffer>false</organismsDiffer>
    <experiments>3</experiments>
</comment>
<comment type="interaction">
    <interactant intactId="EBI-12142299">
        <id>Q96IV6</id>
    </interactant>
    <interactant intactId="EBI-1050125">
        <id>O15173</id>
        <label>PGRMC2</label>
    </interactant>
    <organismsDiffer>false</organismsDiffer>
    <experiments>3</experiments>
</comment>
<comment type="interaction">
    <interactant intactId="EBI-12142299">
        <id>Q96IV6</id>
    </interactant>
    <interactant intactId="EBI-10192441">
        <id>Q86VR2</id>
        <label>RETREG3</label>
    </interactant>
    <organismsDiffer>false</organismsDiffer>
    <experiments>3</experiments>
</comment>
<comment type="interaction">
    <interactant intactId="EBI-12142299">
        <id>Q96IV6</id>
    </interactant>
    <interactant intactId="EBI-3923031">
        <id>Q14973</id>
        <label>SLC10A1</label>
    </interactant>
    <organismsDiffer>false</organismsDiffer>
    <experiments>3</experiments>
</comment>
<comment type="interaction">
    <interactant intactId="EBI-12142299">
        <id>Q96IV6</id>
    </interactant>
    <interactant intactId="EBI-18159983">
        <id>Q3KNW5</id>
        <label>SLC10A6</label>
    </interactant>
    <organismsDiffer>false</organismsDiffer>
    <experiments>3</experiments>
</comment>
<comment type="interaction">
    <interactant intactId="EBI-12142299">
        <id>Q96IV6</id>
    </interactant>
    <interactant intactId="EBI-10262251">
        <id>Q8IWU4</id>
        <label>SLC30A8</label>
    </interactant>
    <organismsDiffer>false</organismsDiffer>
    <experiments>3</experiments>
</comment>
<comment type="interaction">
    <interactant intactId="EBI-12142299">
        <id>Q96IV6</id>
    </interactant>
    <interactant intactId="EBI-1211440">
        <id>P27105</id>
        <label>STOM</label>
    </interactant>
    <organismsDiffer>false</organismsDiffer>
    <experiments>3</experiments>
</comment>
<comment type="interaction">
    <interactant intactId="EBI-12142299">
        <id>Q96IV6</id>
    </interactant>
    <interactant intactId="EBI-744942">
        <id>Q12846</id>
        <label>STX4</label>
    </interactant>
    <organismsDiffer>false</organismsDiffer>
    <experiments>3</experiments>
</comment>
<comment type="interaction">
    <interactant intactId="EBI-12142299">
        <id>Q96IV6</id>
    </interactant>
    <interactant intactId="EBI-2821497">
        <id>Q9BVX2</id>
        <label>TMEM106C</label>
    </interactant>
    <organismsDiffer>false</organismsDiffer>
    <experiments>3</experiments>
</comment>
<comment type="interaction">
    <interactant intactId="EBI-12142299">
        <id>Q96IV6</id>
    </interactant>
    <interactant intactId="EBI-7238458">
        <id>Q8IV31</id>
        <label>TMEM139</label>
    </interactant>
    <organismsDiffer>false</organismsDiffer>
    <experiments>3</experiments>
</comment>
<comment type="interaction">
    <interactant intactId="EBI-12142299">
        <id>Q96IV6</id>
    </interactant>
    <interactant intactId="EBI-2548832">
        <id>Q8N661</id>
        <label>TMEM86B</label>
    </interactant>
    <organismsDiffer>false</organismsDiffer>
    <experiments>3</experiments>
</comment>
<comment type="interaction">
    <interactant intactId="EBI-12142299">
        <id>Q96IV6</id>
    </interactant>
    <interactant intactId="EBI-12345267">
        <id>O15393-2</id>
        <label>TMPRSS2</label>
    </interactant>
    <organismsDiffer>false</organismsDiffer>
    <experiments>3</experiments>
</comment>
<comment type="interaction">
    <interactant intactId="EBI-12142299">
        <id>Q96IV6</id>
    </interactant>
    <interactant intactId="EBI-6447886">
        <id>Q9Y320</id>
        <label>TMX2</label>
    </interactant>
    <organismsDiffer>false</organismsDiffer>
    <experiments>3</experiments>
</comment>
<comment type="subcellular location">
    <subcellularLocation>
        <location evidence="2">Cytoplasm</location>
    </subcellularLocation>
    <subcellularLocation>
        <location evidence="1">Membrane</location>
        <topology evidence="1">Multi-pass membrane protein</topology>
    </subcellularLocation>
</comment>
<comment type="alternative products">
    <event type="alternative splicing"/>
    <isoform>
        <id>Q96IV6-1</id>
        <name>1</name>
        <sequence type="displayed"/>
    </isoform>
    <isoform>
        <id>Q96IV6-2</id>
        <name>2</name>
        <sequence type="described" ref="VSP_056995"/>
    </isoform>
</comment>
<comment type="tissue specificity">
    <text evidence="2">Down-regulated in primary acute myeloid leukemia (AML) patients.</text>
</comment>
<comment type="induction">
    <text evidence="2">Up-regulated during 12-O-tetradecanoyl phorbol-acetate (TPA)-induced megakaryocytic differentiation of K562 cells.</text>
</comment>
<comment type="similarity">
    <text evidence="4">Belongs to the sterol desaturase family.</text>
</comment>
<evidence type="ECO:0000255" key="1"/>
<evidence type="ECO:0000269" key="2">
    <source>
    </source>
</evidence>
<evidence type="ECO:0000303" key="3">
    <source>
    </source>
</evidence>
<evidence type="ECO:0000305" key="4"/>
<organism>
    <name type="scientific">Homo sapiens</name>
    <name type="common">Human</name>
    <dbReference type="NCBI Taxonomy" id="9606"/>
    <lineage>
        <taxon>Eukaryota</taxon>
        <taxon>Metazoa</taxon>
        <taxon>Chordata</taxon>
        <taxon>Craniata</taxon>
        <taxon>Vertebrata</taxon>
        <taxon>Euteleostomi</taxon>
        <taxon>Mammalia</taxon>
        <taxon>Eutheria</taxon>
        <taxon>Euarchontoglires</taxon>
        <taxon>Primates</taxon>
        <taxon>Haplorrhini</taxon>
        <taxon>Catarrhini</taxon>
        <taxon>Hominidae</taxon>
        <taxon>Homo</taxon>
    </lineage>
</organism>
<protein>
    <recommendedName>
        <fullName>Fatty acid hydroxylase domain-containing protein 2</fullName>
    </recommendedName>
</protein>
<dbReference type="EMBL" id="AK023820">
    <property type="status" value="NOT_ANNOTATED_CDS"/>
    <property type="molecule type" value="mRNA"/>
</dbReference>
<dbReference type="EMBL" id="AK295546">
    <property type="protein sequence ID" value="BAG58453.1"/>
    <property type="molecule type" value="mRNA"/>
</dbReference>
<dbReference type="EMBL" id="AC112169">
    <property type="status" value="NOT_ANNOTATED_CDS"/>
    <property type="molecule type" value="Genomic_DNA"/>
</dbReference>
<dbReference type="EMBL" id="BC004506">
    <property type="protein sequence ID" value="AAH04506.2"/>
    <property type="molecule type" value="mRNA"/>
</dbReference>
<dbReference type="EMBL" id="BC007216">
    <property type="protein sequence ID" value="AAH07216.1"/>
    <property type="molecule type" value="mRNA"/>
</dbReference>
<dbReference type="CCDS" id="CCDS43390.1">
    <molecule id="Q96IV6-1"/>
</dbReference>
<dbReference type="RefSeq" id="NP_115761.2">
    <molecule id="Q96IV6-1"/>
    <property type="nucleotide sequence ID" value="NM_032385.5"/>
</dbReference>
<dbReference type="RefSeq" id="XP_006714816.1">
    <molecule id="Q96IV6-1"/>
    <property type="nucleotide sequence ID" value="XM_006714753.3"/>
</dbReference>
<dbReference type="RefSeq" id="XP_016864454.1">
    <property type="nucleotide sequence ID" value="XM_017008965.1"/>
</dbReference>
<dbReference type="RefSeq" id="XP_054207455.1">
    <molecule id="Q96IV6-1"/>
    <property type="nucleotide sequence ID" value="XM_054351480.1"/>
</dbReference>
<dbReference type="BioGRID" id="116039">
    <property type="interactions" value="36"/>
</dbReference>
<dbReference type="FunCoup" id="Q96IV6">
    <property type="interactions" value="579"/>
</dbReference>
<dbReference type="IntAct" id="Q96IV6">
    <property type="interactions" value="30"/>
</dbReference>
<dbReference type="STRING" id="9606.ENSP00000320604"/>
<dbReference type="iPTMnet" id="Q96IV6"/>
<dbReference type="PhosphoSitePlus" id="Q96IV6"/>
<dbReference type="BioMuta" id="FAXDC2"/>
<dbReference type="DMDM" id="74751947"/>
<dbReference type="MassIVE" id="Q96IV6"/>
<dbReference type="PaxDb" id="9606-ENSP00000320604"/>
<dbReference type="PeptideAtlas" id="Q96IV6"/>
<dbReference type="ProteomicsDB" id="4297"/>
<dbReference type="ProteomicsDB" id="76862">
    <molecule id="Q96IV6-1"/>
</dbReference>
<dbReference type="Antibodypedia" id="8145">
    <property type="antibodies" value="68 antibodies from 17 providers"/>
</dbReference>
<dbReference type="DNASU" id="10826"/>
<dbReference type="Ensembl" id="ENST00000326080.10">
    <molecule id="Q96IV6-1"/>
    <property type="protein sequence ID" value="ENSP00000320604.5"/>
    <property type="gene ID" value="ENSG00000170271.11"/>
</dbReference>
<dbReference type="Ensembl" id="ENST00000517938.5">
    <molecule id="Q96IV6-2"/>
    <property type="protein sequence ID" value="ENSP00000430286.1"/>
    <property type="gene ID" value="ENSG00000170271.11"/>
</dbReference>
<dbReference type="GeneID" id="10826"/>
<dbReference type="KEGG" id="hsa:10826"/>
<dbReference type="MANE-Select" id="ENST00000326080.10">
    <property type="protein sequence ID" value="ENSP00000320604.5"/>
    <property type="RefSeq nucleotide sequence ID" value="NM_032385.5"/>
    <property type="RefSeq protein sequence ID" value="NP_115761.2"/>
</dbReference>
<dbReference type="UCSC" id="uc003lvs.5">
    <molecule id="Q96IV6-1"/>
    <property type="organism name" value="human"/>
</dbReference>
<dbReference type="AGR" id="HGNC:1334"/>
<dbReference type="CTD" id="10826"/>
<dbReference type="DisGeNET" id="10826"/>
<dbReference type="GeneCards" id="FAXDC2"/>
<dbReference type="HGNC" id="HGNC:1334">
    <property type="gene designation" value="FAXDC2"/>
</dbReference>
<dbReference type="HPA" id="ENSG00000170271">
    <property type="expression patterns" value="Tissue enhanced (parathyroid)"/>
</dbReference>
<dbReference type="MIM" id="619853">
    <property type="type" value="gene"/>
</dbReference>
<dbReference type="neXtProt" id="NX_Q96IV6"/>
<dbReference type="OpenTargets" id="ENSG00000170271"/>
<dbReference type="PharmGKB" id="PA25915"/>
<dbReference type="VEuPathDB" id="HostDB:ENSG00000170271"/>
<dbReference type="eggNOG" id="KOG0873">
    <property type="taxonomic scope" value="Eukaryota"/>
</dbReference>
<dbReference type="GeneTree" id="ENSGT00940000157328"/>
<dbReference type="HOGENOM" id="CLU_047036_1_1_1"/>
<dbReference type="InParanoid" id="Q96IV6"/>
<dbReference type="OMA" id="QYAHPIE"/>
<dbReference type="OrthoDB" id="408954at2759"/>
<dbReference type="PAN-GO" id="Q96IV6">
    <property type="GO annotations" value="3 GO annotations based on evolutionary models"/>
</dbReference>
<dbReference type="PhylomeDB" id="Q96IV6"/>
<dbReference type="TreeFam" id="TF313020"/>
<dbReference type="PathwayCommons" id="Q96IV6"/>
<dbReference type="SignaLink" id="Q96IV6"/>
<dbReference type="BioGRID-ORCS" id="10826">
    <property type="hits" value="13 hits in 1147 CRISPR screens"/>
</dbReference>
<dbReference type="ChiTaRS" id="FAXDC2">
    <property type="organism name" value="human"/>
</dbReference>
<dbReference type="GenomeRNAi" id="10826"/>
<dbReference type="Pharos" id="Q96IV6">
    <property type="development level" value="Tdark"/>
</dbReference>
<dbReference type="PRO" id="PR:Q96IV6"/>
<dbReference type="Proteomes" id="UP000005640">
    <property type="component" value="Chromosome 5"/>
</dbReference>
<dbReference type="RNAct" id="Q96IV6">
    <property type="molecule type" value="protein"/>
</dbReference>
<dbReference type="Bgee" id="ENSG00000170271">
    <property type="expression patterns" value="Expressed in inferior vagus X ganglion and 208 other cell types or tissues"/>
</dbReference>
<dbReference type="ExpressionAtlas" id="Q96IV6">
    <property type="expression patterns" value="baseline and differential"/>
</dbReference>
<dbReference type="GO" id="GO:0005737">
    <property type="term" value="C:cytoplasm"/>
    <property type="evidence" value="ECO:0000314"/>
    <property type="project" value="UniProtKB"/>
</dbReference>
<dbReference type="GO" id="GO:0005789">
    <property type="term" value="C:endoplasmic reticulum membrane"/>
    <property type="evidence" value="ECO:0000318"/>
    <property type="project" value="GO_Central"/>
</dbReference>
<dbReference type="GO" id="GO:0000254">
    <property type="term" value="F:C-4 methylsterol oxidase activity"/>
    <property type="evidence" value="ECO:0000318"/>
    <property type="project" value="GO_Central"/>
</dbReference>
<dbReference type="GO" id="GO:0005506">
    <property type="term" value="F:iron ion binding"/>
    <property type="evidence" value="ECO:0007669"/>
    <property type="project" value="InterPro"/>
</dbReference>
<dbReference type="GO" id="GO:0045654">
    <property type="term" value="P:positive regulation of megakaryocyte differentiation"/>
    <property type="evidence" value="ECO:0000315"/>
    <property type="project" value="UniProtKB"/>
</dbReference>
<dbReference type="GO" id="GO:0001934">
    <property type="term" value="P:positive regulation of protein phosphorylation"/>
    <property type="evidence" value="ECO:0000315"/>
    <property type="project" value="UniProtKB"/>
</dbReference>
<dbReference type="GO" id="GO:0016126">
    <property type="term" value="P:sterol biosynthetic process"/>
    <property type="evidence" value="ECO:0000318"/>
    <property type="project" value="GO_Central"/>
</dbReference>
<dbReference type="InterPro" id="IPR006694">
    <property type="entry name" value="Fatty_acid_hydroxylase"/>
</dbReference>
<dbReference type="InterPro" id="IPR050307">
    <property type="entry name" value="Sterol_Desaturase_Related"/>
</dbReference>
<dbReference type="PANTHER" id="PTHR11863">
    <property type="entry name" value="STEROL DESATURASE"/>
    <property type="match status" value="1"/>
</dbReference>
<dbReference type="Pfam" id="PF04116">
    <property type="entry name" value="FA_hydroxylase"/>
    <property type="match status" value="1"/>
</dbReference>
<gene>
    <name type="primary">FAXDC2</name>
    <name type="synonym">C5orf4</name>
</gene>
<name>FXDC2_HUMAN</name>